<dbReference type="EMBL" id="HQ288176">
    <property type="protein sequence ID" value="ADY39598.1"/>
    <property type="molecule type" value="mRNA"/>
</dbReference>
<dbReference type="SMR" id="F1CJ67"/>
<dbReference type="GO" id="GO:0005576">
    <property type="term" value="C:extracellular region"/>
    <property type="evidence" value="ECO:0007669"/>
    <property type="project" value="UniProtKB-SubCell"/>
</dbReference>
<dbReference type="GO" id="GO:0015459">
    <property type="term" value="F:potassium channel regulator activity"/>
    <property type="evidence" value="ECO:0007669"/>
    <property type="project" value="UniProtKB-KW"/>
</dbReference>
<dbReference type="GO" id="GO:0090729">
    <property type="term" value="F:toxin activity"/>
    <property type="evidence" value="ECO:0007669"/>
    <property type="project" value="UniProtKB-KW"/>
</dbReference>
<keyword id="KW-1015">Disulfide bond</keyword>
<keyword id="KW-0872">Ion channel impairing toxin</keyword>
<keyword id="KW-0528">Neurotoxin</keyword>
<keyword id="KW-0632">Potassium channel impairing toxin</keyword>
<keyword id="KW-0964">Secreted</keyword>
<keyword id="KW-0732">Signal</keyword>
<keyword id="KW-0800">Toxin</keyword>
<evidence type="ECO:0000250" key="1"/>
<evidence type="ECO:0000255" key="2"/>
<evidence type="ECO:0000305" key="3"/>
<sequence length="62" mass="7147">MQKLLIILILFCILKFNVDVEGRTAFPCNQSKCQERCKKEIKKGKCILQFISVSASQSCRCY</sequence>
<name>KA23I_HOTJU</name>
<protein>
    <recommendedName>
        <fullName>U10-hottentoxin-Hj2a</fullName>
    </recommendedName>
</protein>
<organism>
    <name type="scientific">Hottentotta judaicus</name>
    <name type="common">Black scorpion</name>
    <name type="synonym">Buthotus judaicus</name>
    <dbReference type="NCBI Taxonomy" id="6863"/>
    <lineage>
        <taxon>Eukaryota</taxon>
        <taxon>Metazoa</taxon>
        <taxon>Ecdysozoa</taxon>
        <taxon>Arthropoda</taxon>
        <taxon>Chelicerata</taxon>
        <taxon>Arachnida</taxon>
        <taxon>Scorpiones</taxon>
        <taxon>Buthida</taxon>
        <taxon>Buthoidea</taxon>
        <taxon>Buthidae</taxon>
        <taxon>Hottentotta</taxon>
    </lineage>
</organism>
<feature type="signal peptide" evidence="2">
    <location>
        <begin position="1"/>
        <end position="22"/>
    </location>
</feature>
<feature type="chain" id="PRO_0000417438" description="U10-hottentoxin-Hj2a">
    <location>
        <begin position="23"/>
        <end position="62"/>
    </location>
</feature>
<feature type="site" description="Basic residue of the functional dyad" evidence="1">
    <location>
        <position position="45"/>
    </location>
</feature>
<feature type="site" description="Aromatic residue of the functional dyad" evidence="1">
    <location>
        <position position="62"/>
    </location>
</feature>
<feature type="disulfide bond" evidence="2">
    <location>
        <begin position="28"/>
        <end position="46"/>
    </location>
</feature>
<feature type="disulfide bond" evidence="2">
    <location>
        <begin position="33"/>
        <end position="59"/>
    </location>
</feature>
<feature type="disulfide bond" evidence="2">
    <location>
        <begin position="37"/>
        <end position="61"/>
    </location>
</feature>
<accession>F1CJ67</accession>
<comment type="function">
    <text evidence="1">May block potassium channels.</text>
</comment>
<comment type="subcellular location">
    <subcellularLocation>
        <location evidence="1">Secreted</location>
    </subcellularLocation>
</comment>
<comment type="tissue specificity">
    <text>Expressed by the venom gland.</text>
</comment>
<comment type="domain">
    <text evidence="3">Has the structural arrangement of an alpha-helix connected to antiparallel beta-sheets by disulfide bonds (CS-alpha/beta).</text>
</comment>
<comment type="similarity">
    <text evidence="3">Belongs to the short scorpion toxin superfamily. Potassium channel inhibitor family. Alpha-KTx 23 subfamily.</text>
</comment>
<comment type="caution">
    <text evidence="3">Has been classified as a the potassium channel toxin alpha-KTx 22.3 in PubMed:22230549. Since the subfamily 22 has already been attributed, this peptide should be reclassified as alpha-KTx 23.3.</text>
</comment>
<proteinExistence type="evidence at transcript level"/>
<reference key="1">
    <citation type="journal article" date="2011" name="Toxicon">
        <title>The tale of a resting gland: transcriptome of a replete venom gland from the scorpion Hottentotta judaicus.</title>
        <authorList>
            <person name="Morgenstern D."/>
            <person name="Rohde B.H."/>
            <person name="King G.F."/>
            <person name="Tal T."/>
            <person name="Sher D."/>
            <person name="Zlotkin E."/>
        </authorList>
    </citation>
    <scope>NUCLEOTIDE SEQUENCE [MRNA]</scope>
    <source>
        <tissue>Telson</tissue>
    </source>
</reference>
<reference key="2">
    <citation type="journal article" date="2012" name="Peptides">
        <title>Identification and molecular characterization of three new K(+)-channel specific toxins from the Chinese scorpion Mesobuthus martensii Karsch revealing intronic number polymorphism and alternative splicing in duplicated genes.</title>
        <authorList>
            <person name="Zeng X.C."/>
            <person name="Zhang L."/>
            <person name="Nie Y."/>
            <person name="Luo X."/>
        </authorList>
    </citation>
    <scope>NOMENCLATURE</scope>
</reference>